<protein>
    <recommendedName>
        <fullName>Protein HIRA</fullName>
    </recommendedName>
</protein>
<name>HIRA_DICDI</name>
<proteinExistence type="inferred from homology"/>
<reference key="1">
    <citation type="journal article" date="2002" name="Nature">
        <title>Sequence and analysis of chromosome 2 of Dictyostelium discoideum.</title>
        <authorList>
            <person name="Gloeckner G."/>
            <person name="Eichinger L."/>
            <person name="Szafranski K."/>
            <person name="Pachebat J.A."/>
            <person name="Bankier A.T."/>
            <person name="Dear P.H."/>
            <person name="Lehmann R."/>
            <person name="Baumgart C."/>
            <person name="Parra G."/>
            <person name="Abril J.F."/>
            <person name="Guigo R."/>
            <person name="Kumpf K."/>
            <person name="Tunggal B."/>
            <person name="Cox E.C."/>
            <person name="Quail M.A."/>
            <person name="Platzer M."/>
            <person name="Rosenthal A."/>
            <person name="Noegel A.A."/>
        </authorList>
    </citation>
    <scope>NUCLEOTIDE SEQUENCE [LARGE SCALE GENOMIC DNA]</scope>
    <source>
        <strain>AX4</strain>
    </source>
</reference>
<reference key="2">
    <citation type="journal article" date="2005" name="Nature">
        <title>The genome of the social amoeba Dictyostelium discoideum.</title>
        <authorList>
            <person name="Eichinger L."/>
            <person name="Pachebat J.A."/>
            <person name="Gloeckner G."/>
            <person name="Rajandream M.A."/>
            <person name="Sucgang R."/>
            <person name="Berriman M."/>
            <person name="Song J."/>
            <person name="Olsen R."/>
            <person name="Szafranski K."/>
            <person name="Xu Q."/>
            <person name="Tunggal B."/>
            <person name="Kummerfeld S."/>
            <person name="Madera M."/>
            <person name="Konfortov B.A."/>
            <person name="Rivero F."/>
            <person name="Bankier A.T."/>
            <person name="Lehmann R."/>
            <person name="Hamlin N."/>
            <person name="Davies R."/>
            <person name="Gaudet P."/>
            <person name="Fey P."/>
            <person name="Pilcher K."/>
            <person name="Chen G."/>
            <person name="Saunders D."/>
            <person name="Sodergren E.J."/>
            <person name="Davis P."/>
            <person name="Kerhornou A."/>
            <person name="Nie X."/>
            <person name="Hall N."/>
            <person name="Anjard C."/>
            <person name="Hemphill L."/>
            <person name="Bason N."/>
            <person name="Farbrother P."/>
            <person name="Desany B."/>
            <person name="Just E."/>
            <person name="Morio T."/>
            <person name="Rost R."/>
            <person name="Churcher C.M."/>
            <person name="Cooper J."/>
            <person name="Haydock S."/>
            <person name="van Driessche N."/>
            <person name="Cronin A."/>
            <person name="Goodhead I."/>
            <person name="Muzny D.M."/>
            <person name="Mourier T."/>
            <person name="Pain A."/>
            <person name="Lu M."/>
            <person name="Harper D."/>
            <person name="Lindsay R."/>
            <person name="Hauser H."/>
            <person name="James K.D."/>
            <person name="Quiles M."/>
            <person name="Madan Babu M."/>
            <person name="Saito T."/>
            <person name="Buchrieser C."/>
            <person name="Wardroper A."/>
            <person name="Felder M."/>
            <person name="Thangavelu M."/>
            <person name="Johnson D."/>
            <person name="Knights A."/>
            <person name="Loulseged H."/>
            <person name="Mungall K.L."/>
            <person name="Oliver K."/>
            <person name="Price C."/>
            <person name="Quail M.A."/>
            <person name="Urushihara H."/>
            <person name="Hernandez J."/>
            <person name="Rabbinowitsch E."/>
            <person name="Steffen D."/>
            <person name="Sanders M."/>
            <person name="Ma J."/>
            <person name="Kohara Y."/>
            <person name="Sharp S."/>
            <person name="Simmonds M.N."/>
            <person name="Spiegler S."/>
            <person name="Tivey A."/>
            <person name="Sugano S."/>
            <person name="White B."/>
            <person name="Walker D."/>
            <person name="Woodward J.R."/>
            <person name="Winckler T."/>
            <person name="Tanaka Y."/>
            <person name="Shaulsky G."/>
            <person name="Schleicher M."/>
            <person name="Weinstock G.M."/>
            <person name="Rosenthal A."/>
            <person name="Cox E.C."/>
            <person name="Chisholm R.L."/>
            <person name="Gibbs R.A."/>
            <person name="Loomis W.F."/>
            <person name="Platzer M."/>
            <person name="Kay R.R."/>
            <person name="Williams J.G."/>
            <person name="Dear P.H."/>
            <person name="Noegel A.A."/>
            <person name="Barrell B.G."/>
            <person name="Kuspa A."/>
        </authorList>
    </citation>
    <scope>NUCLEOTIDE SEQUENCE [LARGE SCALE GENOMIC DNA]</scope>
    <source>
        <strain>AX4</strain>
    </source>
</reference>
<evidence type="ECO:0000250" key="1"/>
<evidence type="ECO:0000256" key="2">
    <source>
        <dbReference type="SAM" id="MobiDB-lite"/>
    </source>
</evidence>
<evidence type="ECO:0000305" key="3"/>
<comment type="function">
    <text evidence="1">Required for the periodic repression of histone gene transcription during the cell cycle. Promotes replication-independent chromatin assembly (By similarity).</text>
</comment>
<comment type="subcellular location">
    <subcellularLocation>
        <location evidence="1">Nucleus</location>
    </subcellularLocation>
</comment>
<comment type="similarity">
    <text evidence="3">Belongs to the WD repeat HIR1 family.</text>
</comment>
<sequence>MKILKPQWVSHGGLSIYSIDIHPDGTRVATGGGDAKIKIWSMAPISLLEAEEDAGIPKLLCSIENAHFHSVNSVKWSKDGKYLASGSDDKLCMIWGLSNNNSLLKNTTENWVCVATLRGHASDISEVSWSPDNKYIATCSFDKSIIIWETNKFQMVSKLEEHKGFVKGLTWDPLGRYLASQSEDKSLIIWRTSDWVVETIVTEPFKHSGNSFFLRPSWTPDGQFIVATHGINNATHTGVLVSRTDWDIGLDLVGHRKAVVVSRCSSKIYKDFKSRDQKFCLILLGGQDSTLSLWSSSSPRSLMVTRSLFDQCIQDISWCSDGYSFVACSTDGTVGYISLDPEEIGGSPIGPEEKQIFFKNYYGDAVTIDKEGNVIYGAAGGNLSSAANSGSHAILPENPDQLAMEESNANGVGSGVSGGGVSGGGGSGSGINNQNGGENHSKTNSTSTLQPTQLAMQNQKQTIMPGGKRRITPIFIGSSSQNITKPQPVAIPLHLQQLQHSSSSLKPTGNEPMETDSSTKTSSPSSSSSSTTTATTITEKTATPTKMTPMVPFGLNKLNGTIDGSNDRFSHPRIKDNNNNHNHHIHHRDTHKSSHHDKSDRDKSDRDDQSTKHTTPNIGGSNSNSNNSSKRRSAEPEPTISISKKKKSSSGSNKQQQQQQQQQQTDQNQNSQFSNNNNNNNMIISTVIPTGFSIPLPTLTNKISKKLIDQPIQASALNNRLFPTMTPNTTTTSGVGGSIIIDVNITEQELQDNTVEYFSVIRYLSFETQLWENRIAGRITLITGNKNWCAATTLDSLLYIFNKNGTIIMSNIVPRNQLSFLESNKTNHLLAITCDGFVCVWNVLKKKVELSNRELPFLKNRDSLTIKHAMVTEESGKPIITFSNGDSFVYSSDVGEWVKITDRLGALSEYNSNDTTNTGILSTLQNNNRINSIINSNITNNISNQQQQQQQPSVSNLLSLSNSESQQQQQLSTSLFLEKQLWLAQVLESSLEYKHWLLIYTKYLTNCCNIVKLTDLCTDLLGPSSTLNDHHHHHHHHNHTTGMSMESNPFSNNSLSIPWESTILGLSKRSLLKEILPIMAGNRTLQRMVGQFKESLNAFSKNILVDPFDTLLNK</sequence>
<dbReference type="EMBL" id="AAFI02000015">
    <property type="protein sequence ID" value="EAL69165.1"/>
    <property type="molecule type" value="Genomic_DNA"/>
</dbReference>
<dbReference type="RefSeq" id="XP_643117.1">
    <property type="nucleotide sequence ID" value="XM_638025.1"/>
</dbReference>
<dbReference type="SMR" id="Q86HX1"/>
<dbReference type="FunCoup" id="Q86HX1">
    <property type="interactions" value="118"/>
</dbReference>
<dbReference type="STRING" id="44689.Q86HX1"/>
<dbReference type="PaxDb" id="44689-DDB0233325"/>
<dbReference type="EnsemblProtists" id="EAL69165">
    <property type="protein sequence ID" value="EAL69165"/>
    <property type="gene ID" value="DDB_G0276423"/>
</dbReference>
<dbReference type="GeneID" id="8620522"/>
<dbReference type="KEGG" id="ddi:DDB_G0276423"/>
<dbReference type="dictyBase" id="DDB_G0276423">
    <property type="gene designation" value="hira"/>
</dbReference>
<dbReference type="VEuPathDB" id="AmoebaDB:DDB_G0276423"/>
<dbReference type="eggNOG" id="KOG0973">
    <property type="taxonomic scope" value="Eukaryota"/>
</dbReference>
<dbReference type="HOGENOM" id="CLU_004372_0_0_1"/>
<dbReference type="InParanoid" id="Q86HX1"/>
<dbReference type="OMA" id="RGSWDGD"/>
<dbReference type="PhylomeDB" id="Q86HX1"/>
<dbReference type="PRO" id="PR:Q86HX1"/>
<dbReference type="Proteomes" id="UP000002195">
    <property type="component" value="Chromosome 2"/>
</dbReference>
<dbReference type="GO" id="GO:0000785">
    <property type="term" value="C:chromatin"/>
    <property type="evidence" value="ECO:0000318"/>
    <property type="project" value="GO_Central"/>
</dbReference>
<dbReference type="GO" id="GO:0000417">
    <property type="term" value="C:HIR complex"/>
    <property type="evidence" value="ECO:0000318"/>
    <property type="project" value="GO_Central"/>
</dbReference>
<dbReference type="GO" id="GO:0005634">
    <property type="term" value="C:nucleus"/>
    <property type="evidence" value="ECO:0007669"/>
    <property type="project" value="UniProtKB-SubCell"/>
</dbReference>
<dbReference type="GO" id="GO:0003714">
    <property type="term" value="F:transcription corepressor activity"/>
    <property type="evidence" value="ECO:0000250"/>
    <property type="project" value="dictyBase"/>
</dbReference>
<dbReference type="GO" id="GO:0006338">
    <property type="term" value="P:chromatin remodeling"/>
    <property type="evidence" value="ECO:0000318"/>
    <property type="project" value="GO_Central"/>
</dbReference>
<dbReference type="GO" id="GO:0006351">
    <property type="term" value="P:DNA-templated transcription"/>
    <property type="evidence" value="ECO:0007669"/>
    <property type="project" value="InterPro"/>
</dbReference>
<dbReference type="GO" id="GO:0006357">
    <property type="term" value="P:regulation of transcription by RNA polymerase II"/>
    <property type="evidence" value="ECO:0000250"/>
    <property type="project" value="dictyBase"/>
</dbReference>
<dbReference type="CDD" id="cd00200">
    <property type="entry name" value="WD40"/>
    <property type="match status" value="1"/>
</dbReference>
<dbReference type="FunFam" id="2.130.10.10:FF:001473">
    <property type="entry name" value="Protein HIRA"/>
    <property type="match status" value="1"/>
</dbReference>
<dbReference type="FunFam" id="2.130.10.10:FF:002943">
    <property type="entry name" value="Protein HIRA"/>
    <property type="match status" value="1"/>
</dbReference>
<dbReference type="Gene3D" id="2.130.10.10">
    <property type="entry name" value="YVTN repeat-like/Quinoprotein amine dehydrogenase"/>
    <property type="match status" value="2"/>
</dbReference>
<dbReference type="InterPro" id="IPR055410">
    <property type="entry name" value="CAF1B_HIR1_beta-prop"/>
</dbReference>
<dbReference type="InterPro" id="IPR031120">
    <property type="entry name" value="HIR1-like"/>
</dbReference>
<dbReference type="InterPro" id="IPR011494">
    <property type="entry name" value="HIRA-like_C"/>
</dbReference>
<dbReference type="InterPro" id="IPR019015">
    <property type="entry name" value="HIRA_B_motif"/>
</dbReference>
<dbReference type="InterPro" id="IPR007110">
    <property type="entry name" value="Ig-like_dom"/>
</dbReference>
<dbReference type="InterPro" id="IPR015943">
    <property type="entry name" value="WD40/YVTN_repeat-like_dom_sf"/>
</dbReference>
<dbReference type="InterPro" id="IPR036322">
    <property type="entry name" value="WD40_repeat_dom_sf"/>
</dbReference>
<dbReference type="InterPro" id="IPR001680">
    <property type="entry name" value="WD40_rpt"/>
</dbReference>
<dbReference type="PANTHER" id="PTHR13831">
    <property type="entry name" value="MEMBER OF THE HIR1 FAMILY OF WD-REPEAT PROTEINS"/>
    <property type="match status" value="1"/>
</dbReference>
<dbReference type="PANTHER" id="PTHR13831:SF0">
    <property type="entry name" value="PROTEIN HIRA"/>
    <property type="match status" value="1"/>
</dbReference>
<dbReference type="Pfam" id="PF24105">
    <property type="entry name" value="Beta-prop_CAF1B_HIR1"/>
    <property type="match status" value="1"/>
</dbReference>
<dbReference type="Pfam" id="PF07569">
    <property type="entry name" value="Hira"/>
    <property type="match status" value="1"/>
</dbReference>
<dbReference type="Pfam" id="PF09453">
    <property type="entry name" value="HIRA_B"/>
    <property type="match status" value="1"/>
</dbReference>
<dbReference type="SMART" id="SM00320">
    <property type="entry name" value="WD40"/>
    <property type="match status" value="6"/>
</dbReference>
<dbReference type="SUPFAM" id="SSF50978">
    <property type="entry name" value="WD40 repeat-like"/>
    <property type="match status" value="1"/>
</dbReference>
<dbReference type="PROSITE" id="PS00678">
    <property type="entry name" value="WD_REPEATS_1"/>
    <property type="match status" value="2"/>
</dbReference>
<dbReference type="PROSITE" id="PS50082">
    <property type="entry name" value="WD_REPEATS_2"/>
    <property type="match status" value="4"/>
</dbReference>
<dbReference type="PROSITE" id="PS50294">
    <property type="entry name" value="WD_REPEATS_REGION"/>
    <property type="match status" value="1"/>
</dbReference>
<keyword id="KW-0156">Chromatin regulator</keyword>
<keyword id="KW-0539">Nucleus</keyword>
<keyword id="KW-1185">Reference proteome</keyword>
<keyword id="KW-0677">Repeat</keyword>
<keyword id="KW-0804">Transcription</keyword>
<keyword id="KW-0805">Transcription regulation</keyword>
<keyword id="KW-0853">WD repeat</keyword>
<gene>
    <name type="primary">hira</name>
    <name type="ORF">DDB_G0276423</name>
</gene>
<accession>Q86HX1</accession>
<accession>Q551L3</accession>
<feature type="chain" id="PRO_0000327933" description="Protein HIRA">
    <location>
        <begin position="1"/>
        <end position="1114"/>
    </location>
</feature>
<feature type="repeat" description="WD 1">
    <location>
        <begin position="10"/>
        <end position="50"/>
    </location>
</feature>
<feature type="repeat" description="WD 2">
    <location>
        <begin position="66"/>
        <end position="105"/>
    </location>
</feature>
<feature type="repeat" description="WD 3">
    <location>
        <begin position="119"/>
        <end position="158"/>
    </location>
</feature>
<feature type="repeat" description="WD 4">
    <location>
        <begin position="161"/>
        <end position="200"/>
    </location>
</feature>
<feature type="repeat" description="WD 5">
    <location>
        <begin position="209"/>
        <end position="251"/>
    </location>
</feature>
<feature type="repeat" description="WD 6">
    <location>
        <begin position="262"/>
        <end position="304"/>
    </location>
</feature>
<feature type="repeat" description="WD 7">
    <location>
        <begin position="308"/>
        <end position="347"/>
    </location>
</feature>
<feature type="region of interest" description="Disordered" evidence="2">
    <location>
        <begin position="405"/>
        <end position="449"/>
    </location>
</feature>
<feature type="region of interest" description="Disordered" evidence="2">
    <location>
        <begin position="499"/>
        <end position="682"/>
    </location>
</feature>
<feature type="compositionally biased region" description="Gly residues" evidence="2">
    <location>
        <begin position="412"/>
        <end position="429"/>
    </location>
</feature>
<feature type="compositionally biased region" description="Low complexity" evidence="2">
    <location>
        <begin position="515"/>
        <end position="545"/>
    </location>
</feature>
<feature type="compositionally biased region" description="Basic and acidic residues" evidence="2">
    <location>
        <begin position="565"/>
        <end position="578"/>
    </location>
</feature>
<feature type="compositionally biased region" description="Basic residues" evidence="2">
    <location>
        <begin position="581"/>
        <end position="595"/>
    </location>
</feature>
<feature type="compositionally biased region" description="Basic and acidic residues" evidence="2">
    <location>
        <begin position="596"/>
        <end position="611"/>
    </location>
</feature>
<feature type="compositionally biased region" description="Low complexity" evidence="2">
    <location>
        <begin position="649"/>
        <end position="681"/>
    </location>
</feature>
<organism>
    <name type="scientific">Dictyostelium discoideum</name>
    <name type="common">Social amoeba</name>
    <dbReference type="NCBI Taxonomy" id="44689"/>
    <lineage>
        <taxon>Eukaryota</taxon>
        <taxon>Amoebozoa</taxon>
        <taxon>Evosea</taxon>
        <taxon>Eumycetozoa</taxon>
        <taxon>Dictyostelia</taxon>
        <taxon>Dictyosteliales</taxon>
        <taxon>Dictyosteliaceae</taxon>
        <taxon>Dictyostelium</taxon>
    </lineage>
</organism>